<name>TPIS_PSEPF</name>
<keyword id="KW-0963">Cytoplasm</keyword>
<keyword id="KW-0312">Gluconeogenesis</keyword>
<keyword id="KW-0324">Glycolysis</keyword>
<keyword id="KW-0413">Isomerase</keyword>
<organism>
    <name type="scientific">Pseudomonas fluorescens (strain Pf0-1)</name>
    <dbReference type="NCBI Taxonomy" id="205922"/>
    <lineage>
        <taxon>Bacteria</taxon>
        <taxon>Pseudomonadati</taxon>
        <taxon>Pseudomonadota</taxon>
        <taxon>Gammaproteobacteria</taxon>
        <taxon>Pseudomonadales</taxon>
        <taxon>Pseudomonadaceae</taxon>
        <taxon>Pseudomonas</taxon>
    </lineage>
</organism>
<sequence>MRRPMVAGNWKMHGTRASVAELINGLRHLALPSGVDVAVFPPCLYINQVIDGLKGKSISVGAQNSAVESMQGALTGEIAPSQLVDAGCSLVLVGHSERRQIMGERDGMLNRKFAAAQACGLIPVLCVGETLEQREAGKTLEVVGRQLGSIIEELGVGAFANAVIAYEPVWAIGTGLTATPQQAQDVHKAIREQLAAENSEVARGVRLLYGGSVKAANAVELFGMPDIDGGLIGGASLNADEFGAICRAAGN</sequence>
<protein>
    <recommendedName>
        <fullName evidence="1">Triosephosphate isomerase</fullName>
        <shortName evidence="1">TIM</shortName>
        <shortName evidence="1">TPI</shortName>
        <ecNumber evidence="1">5.3.1.1</ecNumber>
    </recommendedName>
    <alternativeName>
        <fullName evidence="1">Triose-phosphate isomerase</fullName>
    </alternativeName>
</protein>
<dbReference type="EC" id="5.3.1.1" evidence="1"/>
<dbReference type="EMBL" id="CP000094">
    <property type="protein sequence ID" value="ABA72518.1"/>
    <property type="molecule type" value="Genomic_DNA"/>
</dbReference>
<dbReference type="RefSeq" id="WP_007953744.1">
    <property type="nucleotide sequence ID" value="NC_007492.2"/>
</dbReference>
<dbReference type="SMR" id="Q3KI88"/>
<dbReference type="KEGG" id="pfo:Pfl01_0775"/>
<dbReference type="eggNOG" id="COG0149">
    <property type="taxonomic scope" value="Bacteria"/>
</dbReference>
<dbReference type="HOGENOM" id="CLU_024251_2_1_6"/>
<dbReference type="UniPathway" id="UPA00109">
    <property type="reaction ID" value="UER00189"/>
</dbReference>
<dbReference type="UniPathway" id="UPA00138"/>
<dbReference type="Proteomes" id="UP000002704">
    <property type="component" value="Chromosome"/>
</dbReference>
<dbReference type="GO" id="GO:0005829">
    <property type="term" value="C:cytosol"/>
    <property type="evidence" value="ECO:0007669"/>
    <property type="project" value="TreeGrafter"/>
</dbReference>
<dbReference type="GO" id="GO:0004807">
    <property type="term" value="F:triose-phosphate isomerase activity"/>
    <property type="evidence" value="ECO:0007669"/>
    <property type="project" value="UniProtKB-UniRule"/>
</dbReference>
<dbReference type="GO" id="GO:0006094">
    <property type="term" value="P:gluconeogenesis"/>
    <property type="evidence" value="ECO:0007669"/>
    <property type="project" value="UniProtKB-UniRule"/>
</dbReference>
<dbReference type="GO" id="GO:0046166">
    <property type="term" value="P:glyceraldehyde-3-phosphate biosynthetic process"/>
    <property type="evidence" value="ECO:0007669"/>
    <property type="project" value="TreeGrafter"/>
</dbReference>
<dbReference type="GO" id="GO:0019563">
    <property type="term" value="P:glycerol catabolic process"/>
    <property type="evidence" value="ECO:0007669"/>
    <property type="project" value="TreeGrafter"/>
</dbReference>
<dbReference type="GO" id="GO:0006096">
    <property type="term" value="P:glycolytic process"/>
    <property type="evidence" value="ECO:0007669"/>
    <property type="project" value="UniProtKB-UniRule"/>
</dbReference>
<dbReference type="CDD" id="cd00311">
    <property type="entry name" value="TIM"/>
    <property type="match status" value="1"/>
</dbReference>
<dbReference type="FunFam" id="3.20.20.70:FF:000016">
    <property type="entry name" value="Triosephosphate isomerase"/>
    <property type="match status" value="1"/>
</dbReference>
<dbReference type="Gene3D" id="3.20.20.70">
    <property type="entry name" value="Aldolase class I"/>
    <property type="match status" value="1"/>
</dbReference>
<dbReference type="HAMAP" id="MF_00147_B">
    <property type="entry name" value="TIM_B"/>
    <property type="match status" value="1"/>
</dbReference>
<dbReference type="InterPro" id="IPR013785">
    <property type="entry name" value="Aldolase_TIM"/>
</dbReference>
<dbReference type="InterPro" id="IPR035990">
    <property type="entry name" value="TIM_sf"/>
</dbReference>
<dbReference type="InterPro" id="IPR022896">
    <property type="entry name" value="TrioseP_Isoase_bac/euk"/>
</dbReference>
<dbReference type="InterPro" id="IPR000652">
    <property type="entry name" value="Triosephosphate_isomerase"/>
</dbReference>
<dbReference type="InterPro" id="IPR020861">
    <property type="entry name" value="Triosephosphate_isomerase_AS"/>
</dbReference>
<dbReference type="NCBIfam" id="TIGR00419">
    <property type="entry name" value="tim"/>
    <property type="match status" value="1"/>
</dbReference>
<dbReference type="PANTHER" id="PTHR21139">
    <property type="entry name" value="TRIOSEPHOSPHATE ISOMERASE"/>
    <property type="match status" value="1"/>
</dbReference>
<dbReference type="PANTHER" id="PTHR21139:SF42">
    <property type="entry name" value="TRIOSEPHOSPHATE ISOMERASE"/>
    <property type="match status" value="1"/>
</dbReference>
<dbReference type="Pfam" id="PF00121">
    <property type="entry name" value="TIM"/>
    <property type="match status" value="1"/>
</dbReference>
<dbReference type="SUPFAM" id="SSF51351">
    <property type="entry name" value="Triosephosphate isomerase (TIM)"/>
    <property type="match status" value="1"/>
</dbReference>
<dbReference type="PROSITE" id="PS00171">
    <property type="entry name" value="TIM_1"/>
    <property type="match status" value="1"/>
</dbReference>
<dbReference type="PROSITE" id="PS51440">
    <property type="entry name" value="TIM_2"/>
    <property type="match status" value="1"/>
</dbReference>
<gene>
    <name evidence="1" type="primary">tpiA</name>
    <name type="ordered locus">Pfl01_0775</name>
</gene>
<proteinExistence type="inferred from homology"/>
<feature type="chain" id="PRO_0000307536" description="Triosephosphate isomerase">
    <location>
        <begin position="1"/>
        <end position="251"/>
    </location>
</feature>
<feature type="active site" description="Electrophile" evidence="1">
    <location>
        <position position="95"/>
    </location>
</feature>
<feature type="active site" description="Proton acceptor" evidence="1">
    <location>
        <position position="167"/>
    </location>
</feature>
<feature type="binding site" evidence="1">
    <location>
        <begin position="9"/>
        <end position="11"/>
    </location>
    <ligand>
        <name>substrate</name>
    </ligand>
</feature>
<feature type="binding site" evidence="1">
    <location>
        <position position="173"/>
    </location>
    <ligand>
        <name>substrate</name>
    </ligand>
</feature>
<feature type="binding site" evidence="1">
    <location>
        <position position="212"/>
    </location>
    <ligand>
        <name>substrate</name>
    </ligand>
</feature>
<feature type="binding site" evidence="1">
    <location>
        <begin position="233"/>
        <end position="234"/>
    </location>
    <ligand>
        <name>substrate</name>
    </ligand>
</feature>
<reference key="1">
    <citation type="journal article" date="2009" name="Genome Biol.">
        <title>Genomic and genetic analyses of diversity and plant interactions of Pseudomonas fluorescens.</title>
        <authorList>
            <person name="Silby M.W."/>
            <person name="Cerdeno-Tarraga A.M."/>
            <person name="Vernikos G.S."/>
            <person name="Giddens S.R."/>
            <person name="Jackson R.W."/>
            <person name="Preston G.M."/>
            <person name="Zhang X.-X."/>
            <person name="Moon C.D."/>
            <person name="Gehrig S.M."/>
            <person name="Godfrey S.A.C."/>
            <person name="Knight C.G."/>
            <person name="Malone J.G."/>
            <person name="Robinson Z."/>
            <person name="Spiers A.J."/>
            <person name="Harris S."/>
            <person name="Challis G.L."/>
            <person name="Yaxley A.M."/>
            <person name="Harris D."/>
            <person name="Seeger K."/>
            <person name="Murphy L."/>
            <person name="Rutter S."/>
            <person name="Squares R."/>
            <person name="Quail M.A."/>
            <person name="Saunders E."/>
            <person name="Mavromatis K."/>
            <person name="Brettin T.S."/>
            <person name="Bentley S.D."/>
            <person name="Hothersall J."/>
            <person name="Stephens E."/>
            <person name="Thomas C.M."/>
            <person name="Parkhill J."/>
            <person name="Levy S.B."/>
            <person name="Rainey P.B."/>
            <person name="Thomson N.R."/>
        </authorList>
    </citation>
    <scope>NUCLEOTIDE SEQUENCE [LARGE SCALE GENOMIC DNA]</scope>
    <source>
        <strain>Pf0-1</strain>
    </source>
</reference>
<accession>Q3KI88</accession>
<evidence type="ECO:0000255" key="1">
    <source>
        <dbReference type="HAMAP-Rule" id="MF_00147"/>
    </source>
</evidence>
<comment type="function">
    <text evidence="1">Involved in the gluconeogenesis. Catalyzes stereospecifically the conversion of dihydroxyacetone phosphate (DHAP) to D-glyceraldehyde-3-phosphate (G3P).</text>
</comment>
<comment type="catalytic activity">
    <reaction evidence="1">
        <text>D-glyceraldehyde 3-phosphate = dihydroxyacetone phosphate</text>
        <dbReference type="Rhea" id="RHEA:18585"/>
        <dbReference type="ChEBI" id="CHEBI:57642"/>
        <dbReference type="ChEBI" id="CHEBI:59776"/>
        <dbReference type="EC" id="5.3.1.1"/>
    </reaction>
</comment>
<comment type="pathway">
    <text evidence="1">Carbohydrate biosynthesis; gluconeogenesis.</text>
</comment>
<comment type="pathway">
    <text evidence="1">Carbohydrate degradation; glycolysis; D-glyceraldehyde 3-phosphate from glycerone phosphate: step 1/1.</text>
</comment>
<comment type="subunit">
    <text evidence="1">Homodimer.</text>
</comment>
<comment type="subcellular location">
    <subcellularLocation>
        <location evidence="1">Cytoplasm</location>
    </subcellularLocation>
</comment>
<comment type="similarity">
    <text evidence="1">Belongs to the triosephosphate isomerase family.</text>
</comment>